<sequence>MRAIVQRVKESSVSVDGKTIGEIKKGFTVLVGISKDDTIEDVKYLKKKVVNLRVFEDENGKLNKSLKDVDGELLIISQFTLYGDCRKGNRPSFIEALGGEDAKKLYLDFIDMCKEEINNVQTGEFGADMLVSIKNDGPVTLMIDSKKEF</sequence>
<proteinExistence type="inferred from homology"/>
<protein>
    <recommendedName>
        <fullName evidence="1">D-aminoacyl-tRNA deacylase</fullName>
        <shortName evidence="1">DTD</shortName>
        <ecNumber evidence="1">3.1.1.96</ecNumber>
    </recommendedName>
    <alternativeName>
        <fullName evidence="1">Gly-tRNA(Ala) deacylase</fullName>
    </alternativeName>
</protein>
<keyword id="KW-0963">Cytoplasm</keyword>
<keyword id="KW-0378">Hydrolase</keyword>
<keyword id="KW-1185">Reference proteome</keyword>
<keyword id="KW-0694">RNA-binding</keyword>
<keyword id="KW-0820">tRNA-binding</keyword>
<evidence type="ECO:0000255" key="1">
    <source>
        <dbReference type="HAMAP-Rule" id="MF_00518"/>
    </source>
</evidence>
<organism>
    <name type="scientific">Clostridium novyi (strain NT)</name>
    <dbReference type="NCBI Taxonomy" id="386415"/>
    <lineage>
        <taxon>Bacteria</taxon>
        <taxon>Bacillati</taxon>
        <taxon>Bacillota</taxon>
        <taxon>Clostridia</taxon>
        <taxon>Eubacteriales</taxon>
        <taxon>Clostridiaceae</taxon>
        <taxon>Clostridium</taxon>
    </lineage>
</organism>
<feature type="chain" id="PRO_1000050827" description="D-aminoacyl-tRNA deacylase">
    <location>
        <begin position="1"/>
        <end position="149"/>
    </location>
</feature>
<feature type="short sequence motif" description="Gly-cisPro motif, important for rejection of L-amino acids" evidence="1">
    <location>
        <begin position="137"/>
        <end position="138"/>
    </location>
</feature>
<reference key="1">
    <citation type="journal article" date="2006" name="Nat. Biotechnol.">
        <title>The genome and transcriptomes of the anti-tumor agent Clostridium novyi-NT.</title>
        <authorList>
            <person name="Bettegowda C."/>
            <person name="Huang X."/>
            <person name="Lin J."/>
            <person name="Cheong I."/>
            <person name="Kohli M."/>
            <person name="Szabo S.A."/>
            <person name="Zhang X."/>
            <person name="Diaz L.A. Jr."/>
            <person name="Velculescu V.E."/>
            <person name="Parmigiani G."/>
            <person name="Kinzler K.W."/>
            <person name="Vogelstein B."/>
            <person name="Zhou S."/>
        </authorList>
    </citation>
    <scope>NUCLEOTIDE SEQUENCE [LARGE SCALE GENOMIC DNA]</scope>
    <source>
        <strain>NT</strain>
    </source>
</reference>
<accession>A0PZW6</accession>
<comment type="function">
    <text evidence="1">An aminoacyl-tRNA editing enzyme that deacylates mischarged D-aminoacyl-tRNAs. Also deacylates mischarged glycyl-tRNA(Ala), protecting cells against glycine mischarging by AlaRS. Acts via tRNA-based rather than protein-based catalysis; rejects L-amino acids rather than detecting D-amino acids in the active site. By recycling D-aminoacyl-tRNA to D-amino acids and free tRNA molecules, this enzyme counteracts the toxicity associated with the formation of D-aminoacyl-tRNA entities in vivo and helps enforce protein L-homochirality.</text>
</comment>
<comment type="catalytic activity">
    <reaction evidence="1">
        <text>glycyl-tRNA(Ala) + H2O = tRNA(Ala) + glycine + H(+)</text>
        <dbReference type="Rhea" id="RHEA:53744"/>
        <dbReference type="Rhea" id="RHEA-COMP:9657"/>
        <dbReference type="Rhea" id="RHEA-COMP:13640"/>
        <dbReference type="ChEBI" id="CHEBI:15377"/>
        <dbReference type="ChEBI" id="CHEBI:15378"/>
        <dbReference type="ChEBI" id="CHEBI:57305"/>
        <dbReference type="ChEBI" id="CHEBI:78442"/>
        <dbReference type="ChEBI" id="CHEBI:78522"/>
        <dbReference type="EC" id="3.1.1.96"/>
    </reaction>
</comment>
<comment type="catalytic activity">
    <reaction evidence="1">
        <text>a D-aminoacyl-tRNA + H2O = a tRNA + a D-alpha-amino acid + H(+)</text>
        <dbReference type="Rhea" id="RHEA:13953"/>
        <dbReference type="Rhea" id="RHEA-COMP:10123"/>
        <dbReference type="Rhea" id="RHEA-COMP:10124"/>
        <dbReference type="ChEBI" id="CHEBI:15377"/>
        <dbReference type="ChEBI" id="CHEBI:15378"/>
        <dbReference type="ChEBI" id="CHEBI:59871"/>
        <dbReference type="ChEBI" id="CHEBI:78442"/>
        <dbReference type="ChEBI" id="CHEBI:79333"/>
        <dbReference type="EC" id="3.1.1.96"/>
    </reaction>
</comment>
<comment type="subunit">
    <text evidence="1">Homodimer.</text>
</comment>
<comment type="subcellular location">
    <subcellularLocation>
        <location evidence="1">Cytoplasm</location>
    </subcellularLocation>
</comment>
<comment type="domain">
    <text evidence="1">A Gly-cisPro motif from one monomer fits into the active site of the other monomer to allow specific chiral rejection of L-amino acids.</text>
</comment>
<comment type="similarity">
    <text evidence="1">Belongs to the DTD family.</text>
</comment>
<dbReference type="EC" id="3.1.1.96" evidence="1"/>
<dbReference type="EMBL" id="CP000382">
    <property type="protein sequence ID" value="ABK60983.1"/>
    <property type="molecule type" value="Genomic_DNA"/>
</dbReference>
<dbReference type="RefSeq" id="WP_011721922.1">
    <property type="nucleotide sequence ID" value="NC_008593.1"/>
</dbReference>
<dbReference type="SMR" id="A0PZW6"/>
<dbReference type="STRING" id="386415.NT01CX_1845"/>
<dbReference type="KEGG" id="cno:NT01CX_1845"/>
<dbReference type="eggNOG" id="COG1490">
    <property type="taxonomic scope" value="Bacteria"/>
</dbReference>
<dbReference type="HOGENOM" id="CLU_076901_1_0_9"/>
<dbReference type="Proteomes" id="UP000008220">
    <property type="component" value="Chromosome"/>
</dbReference>
<dbReference type="GO" id="GO:0005737">
    <property type="term" value="C:cytoplasm"/>
    <property type="evidence" value="ECO:0007669"/>
    <property type="project" value="UniProtKB-SubCell"/>
</dbReference>
<dbReference type="GO" id="GO:0051500">
    <property type="term" value="F:D-tyrosyl-tRNA(Tyr) deacylase activity"/>
    <property type="evidence" value="ECO:0007669"/>
    <property type="project" value="TreeGrafter"/>
</dbReference>
<dbReference type="GO" id="GO:0106026">
    <property type="term" value="F:Gly-tRNA(Ala) deacylase activity"/>
    <property type="evidence" value="ECO:0007669"/>
    <property type="project" value="UniProtKB-UniRule"/>
</dbReference>
<dbReference type="GO" id="GO:0043908">
    <property type="term" value="F:Ser(Gly)-tRNA(Ala) hydrolase activity"/>
    <property type="evidence" value="ECO:0007669"/>
    <property type="project" value="UniProtKB-UniRule"/>
</dbReference>
<dbReference type="GO" id="GO:0000049">
    <property type="term" value="F:tRNA binding"/>
    <property type="evidence" value="ECO:0007669"/>
    <property type="project" value="UniProtKB-UniRule"/>
</dbReference>
<dbReference type="GO" id="GO:0019478">
    <property type="term" value="P:D-amino acid catabolic process"/>
    <property type="evidence" value="ECO:0007669"/>
    <property type="project" value="UniProtKB-UniRule"/>
</dbReference>
<dbReference type="CDD" id="cd00563">
    <property type="entry name" value="Dtyr_deacylase"/>
    <property type="match status" value="1"/>
</dbReference>
<dbReference type="FunFam" id="3.50.80.10:FF:000001">
    <property type="entry name" value="D-aminoacyl-tRNA deacylase"/>
    <property type="match status" value="1"/>
</dbReference>
<dbReference type="Gene3D" id="3.50.80.10">
    <property type="entry name" value="D-tyrosyl-tRNA(Tyr) deacylase"/>
    <property type="match status" value="1"/>
</dbReference>
<dbReference type="HAMAP" id="MF_00518">
    <property type="entry name" value="Deacylase_Dtd"/>
    <property type="match status" value="1"/>
</dbReference>
<dbReference type="InterPro" id="IPR003732">
    <property type="entry name" value="Daa-tRNA_deacyls_DTD"/>
</dbReference>
<dbReference type="InterPro" id="IPR023509">
    <property type="entry name" value="DTD-like_sf"/>
</dbReference>
<dbReference type="NCBIfam" id="TIGR00256">
    <property type="entry name" value="D-aminoacyl-tRNA deacylase"/>
    <property type="match status" value="1"/>
</dbReference>
<dbReference type="PANTHER" id="PTHR10472:SF5">
    <property type="entry name" value="D-AMINOACYL-TRNA DEACYLASE 1"/>
    <property type="match status" value="1"/>
</dbReference>
<dbReference type="PANTHER" id="PTHR10472">
    <property type="entry name" value="D-TYROSYL-TRNA TYR DEACYLASE"/>
    <property type="match status" value="1"/>
</dbReference>
<dbReference type="Pfam" id="PF02580">
    <property type="entry name" value="Tyr_Deacylase"/>
    <property type="match status" value="1"/>
</dbReference>
<dbReference type="SUPFAM" id="SSF69500">
    <property type="entry name" value="DTD-like"/>
    <property type="match status" value="1"/>
</dbReference>
<name>DTD_CLONN</name>
<gene>
    <name evidence="1" type="primary">dtd</name>
    <name type="ordered locus">NT01CX_1845</name>
</gene>